<proteinExistence type="inferred from homology"/>
<accession>Q9KNP9</accession>
<name>METJ_VIBCH</name>
<protein>
    <recommendedName>
        <fullName evidence="1">Met repressor</fullName>
    </recommendedName>
    <alternativeName>
        <fullName evidence="1">Met regulon regulatory protein MetJ</fullName>
    </alternativeName>
</protein>
<evidence type="ECO:0000255" key="1">
    <source>
        <dbReference type="HAMAP-Rule" id="MF_00744"/>
    </source>
</evidence>
<gene>
    <name evidence="1" type="primary">metJ</name>
    <name type="ordered locus">VC_2682</name>
</gene>
<comment type="function">
    <text evidence="1">This regulatory protein, when combined with SAM (S-adenosylmethionine) represses the expression of the methionine regulon and of enzymes involved in SAM synthesis.</text>
</comment>
<comment type="subunit">
    <text evidence="1">Homodimer.</text>
</comment>
<comment type="subcellular location">
    <subcellularLocation>
        <location evidence="1">Cytoplasm</location>
    </subcellularLocation>
</comment>
<comment type="domain">
    <text>Does not bind DNA by a helix-turn-helix motif.</text>
</comment>
<comment type="similarity">
    <text evidence="1">Belongs to the MetJ family.</text>
</comment>
<sequence length="105" mass="12119">MADWNGEYISPYAEHGKKSELVKKITVSIPLKVLKVLTDERTRRQVNNLRHATNSELLCEAFLHAYTGQPLPTDEDLRKDRPDDIPAEAKRLMTEMGIEFESYDE</sequence>
<feature type="chain" id="PRO_0000198408" description="Met repressor">
    <location>
        <begin position="1"/>
        <end position="105"/>
    </location>
</feature>
<dbReference type="EMBL" id="AE003852">
    <property type="protein sequence ID" value="AAF95823.1"/>
    <property type="molecule type" value="Genomic_DNA"/>
</dbReference>
<dbReference type="PIR" id="E82047">
    <property type="entry name" value="E82047"/>
</dbReference>
<dbReference type="RefSeq" id="NP_232310.1">
    <property type="nucleotide sequence ID" value="NC_002505.1"/>
</dbReference>
<dbReference type="RefSeq" id="WP_000796267.1">
    <property type="nucleotide sequence ID" value="NZ_LT906614.1"/>
</dbReference>
<dbReference type="SMR" id="Q9KNP9"/>
<dbReference type="STRING" id="243277.VC_2682"/>
<dbReference type="DNASU" id="2615510"/>
<dbReference type="EnsemblBacteria" id="AAF95823">
    <property type="protein sequence ID" value="AAF95823"/>
    <property type="gene ID" value="VC_2682"/>
</dbReference>
<dbReference type="GeneID" id="94012672"/>
<dbReference type="KEGG" id="vch:VC_2682"/>
<dbReference type="PATRIC" id="fig|243277.26.peg.2557"/>
<dbReference type="eggNOG" id="COG3060">
    <property type="taxonomic scope" value="Bacteria"/>
</dbReference>
<dbReference type="HOGENOM" id="CLU_142318_0_0_6"/>
<dbReference type="Proteomes" id="UP000000584">
    <property type="component" value="Chromosome 1"/>
</dbReference>
<dbReference type="GO" id="GO:0005737">
    <property type="term" value="C:cytoplasm"/>
    <property type="evidence" value="ECO:0007669"/>
    <property type="project" value="UniProtKB-SubCell"/>
</dbReference>
<dbReference type="GO" id="GO:0003677">
    <property type="term" value="F:DNA binding"/>
    <property type="evidence" value="ECO:0007669"/>
    <property type="project" value="UniProtKB-KW"/>
</dbReference>
<dbReference type="GO" id="GO:0003700">
    <property type="term" value="F:DNA-binding transcription factor activity"/>
    <property type="evidence" value="ECO:0007669"/>
    <property type="project" value="InterPro"/>
</dbReference>
<dbReference type="GO" id="GO:0009086">
    <property type="term" value="P:methionine biosynthetic process"/>
    <property type="evidence" value="ECO:0007669"/>
    <property type="project" value="UniProtKB-UniRule"/>
</dbReference>
<dbReference type="GO" id="GO:0045892">
    <property type="term" value="P:negative regulation of DNA-templated transcription"/>
    <property type="evidence" value="ECO:0007669"/>
    <property type="project" value="UniProtKB-UniRule"/>
</dbReference>
<dbReference type="CDD" id="cd00490">
    <property type="entry name" value="Met_repressor_MetJ"/>
    <property type="match status" value="1"/>
</dbReference>
<dbReference type="FunFam" id="1.10.140.10:FF:000001">
    <property type="entry name" value="Met repressor"/>
    <property type="match status" value="1"/>
</dbReference>
<dbReference type="Gene3D" id="1.10.140.10">
    <property type="entry name" value="MET Apo-Repressor, subunit A"/>
    <property type="match status" value="1"/>
</dbReference>
<dbReference type="HAMAP" id="MF_00744">
    <property type="entry name" value="MetJ"/>
    <property type="match status" value="1"/>
</dbReference>
<dbReference type="InterPro" id="IPR002084">
    <property type="entry name" value="Met_repressor_MetJ"/>
</dbReference>
<dbReference type="InterPro" id="IPR023453">
    <property type="entry name" value="Met_repressor_MetJ_dom_sf"/>
</dbReference>
<dbReference type="InterPro" id="IPR010985">
    <property type="entry name" value="Ribbon_hlx_hlx"/>
</dbReference>
<dbReference type="NCBIfam" id="NF003622">
    <property type="entry name" value="PRK05264.1"/>
    <property type="match status" value="1"/>
</dbReference>
<dbReference type="Pfam" id="PF01340">
    <property type="entry name" value="MetJ"/>
    <property type="match status" value="1"/>
</dbReference>
<dbReference type="SUPFAM" id="SSF47598">
    <property type="entry name" value="Ribbon-helix-helix"/>
    <property type="match status" value="1"/>
</dbReference>
<organism>
    <name type="scientific">Vibrio cholerae serotype O1 (strain ATCC 39315 / El Tor Inaba N16961)</name>
    <dbReference type="NCBI Taxonomy" id="243277"/>
    <lineage>
        <taxon>Bacteria</taxon>
        <taxon>Pseudomonadati</taxon>
        <taxon>Pseudomonadota</taxon>
        <taxon>Gammaproteobacteria</taxon>
        <taxon>Vibrionales</taxon>
        <taxon>Vibrionaceae</taxon>
        <taxon>Vibrio</taxon>
    </lineage>
</organism>
<reference key="1">
    <citation type="journal article" date="2000" name="Nature">
        <title>DNA sequence of both chromosomes of the cholera pathogen Vibrio cholerae.</title>
        <authorList>
            <person name="Heidelberg J.F."/>
            <person name="Eisen J.A."/>
            <person name="Nelson W.C."/>
            <person name="Clayton R.A."/>
            <person name="Gwinn M.L."/>
            <person name="Dodson R.J."/>
            <person name="Haft D.H."/>
            <person name="Hickey E.K."/>
            <person name="Peterson J.D."/>
            <person name="Umayam L.A."/>
            <person name="Gill S.R."/>
            <person name="Nelson K.E."/>
            <person name="Read T.D."/>
            <person name="Tettelin H."/>
            <person name="Richardson D.L."/>
            <person name="Ermolaeva M.D."/>
            <person name="Vamathevan J.J."/>
            <person name="Bass S."/>
            <person name="Qin H."/>
            <person name="Dragoi I."/>
            <person name="Sellers P."/>
            <person name="McDonald L.A."/>
            <person name="Utterback T.R."/>
            <person name="Fleischmann R.D."/>
            <person name="Nierman W.C."/>
            <person name="White O."/>
            <person name="Salzberg S.L."/>
            <person name="Smith H.O."/>
            <person name="Colwell R.R."/>
            <person name="Mekalanos J.J."/>
            <person name="Venter J.C."/>
            <person name="Fraser C.M."/>
        </authorList>
    </citation>
    <scope>NUCLEOTIDE SEQUENCE [LARGE SCALE GENOMIC DNA]</scope>
    <source>
        <strain>ATCC 39315 / El Tor Inaba N16961</strain>
    </source>
</reference>
<keyword id="KW-0028">Amino-acid biosynthesis</keyword>
<keyword id="KW-0963">Cytoplasm</keyword>
<keyword id="KW-0238">DNA-binding</keyword>
<keyword id="KW-0486">Methionine biosynthesis</keyword>
<keyword id="KW-1185">Reference proteome</keyword>
<keyword id="KW-0678">Repressor</keyword>
<keyword id="KW-0804">Transcription</keyword>
<keyword id="KW-0805">Transcription regulation</keyword>